<keyword id="KW-1185">Reference proteome</keyword>
<keyword id="KW-0687">Ribonucleoprotein</keyword>
<keyword id="KW-0689">Ribosomal protein</keyword>
<keyword id="KW-0694">RNA-binding</keyword>
<keyword id="KW-0699">rRNA-binding</keyword>
<name>RS5_METAC</name>
<protein>
    <recommendedName>
        <fullName evidence="1">Small ribosomal subunit protein uS5</fullName>
    </recommendedName>
    <alternativeName>
        <fullName evidence="2">30S ribosomal protein S5</fullName>
    </alternativeName>
</protein>
<proteinExistence type="inferred from homology"/>
<accession>Q8TRS7</accession>
<dbReference type="EMBL" id="AE010299">
    <property type="protein sequence ID" value="AAM04517.1"/>
    <property type="molecule type" value="Genomic_DNA"/>
</dbReference>
<dbReference type="RefSeq" id="WP_011021121.1">
    <property type="nucleotide sequence ID" value="NC_003552.1"/>
</dbReference>
<dbReference type="SMR" id="Q8TRS7"/>
<dbReference type="FunCoup" id="Q8TRS7">
    <property type="interactions" value="197"/>
</dbReference>
<dbReference type="STRING" id="188937.MA_1092"/>
<dbReference type="EnsemblBacteria" id="AAM04517">
    <property type="protein sequence ID" value="AAM04517"/>
    <property type="gene ID" value="MA_1092"/>
</dbReference>
<dbReference type="GeneID" id="1472982"/>
<dbReference type="KEGG" id="mac:MA_1092"/>
<dbReference type="HOGENOM" id="CLU_065898_0_1_2"/>
<dbReference type="InParanoid" id="Q8TRS7"/>
<dbReference type="OrthoDB" id="38155at2157"/>
<dbReference type="PhylomeDB" id="Q8TRS7"/>
<dbReference type="Proteomes" id="UP000002487">
    <property type="component" value="Chromosome"/>
</dbReference>
<dbReference type="GO" id="GO:0022627">
    <property type="term" value="C:cytosolic small ribosomal subunit"/>
    <property type="evidence" value="ECO:0000318"/>
    <property type="project" value="GO_Central"/>
</dbReference>
<dbReference type="GO" id="GO:0019843">
    <property type="term" value="F:rRNA binding"/>
    <property type="evidence" value="ECO:0007669"/>
    <property type="project" value="UniProtKB-UniRule"/>
</dbReference>
<dbReference type="GO" id="GO:0003735">
    <property type="term" value="F:structural constituent of ribosome"/>
    <property type="evidence" value="ECO:0000318"/>
    <property type="project" value="GO_Central"/>
</dbReference>
<dbReference type="GO" id="GO:0006412">
    <property type="term" value="P:translation"/>
    <property type="evidence" value="ECO:0000318"/>
    <property type="project" value="GO_Central"/>
</dbReference>
<dbReference type="FunFam" id="3.30.160.20:FF:000002">
    <property type="entry name" value="40S ribosomal protein S2"/>
    <property type="match status" value="1"/>
</dbReference>
<dbReference type="FunFam" id="3.30.230.10:FF:000004">
    <property type="entry name" value="40S ribosomal protein S2"/>
    <property type="match status" value="1"/>
</dbReference>
<dbReference type="Gene3D" id="3.30.160.20">
    <property type="match status" value="1"/>
</dbReference>
<dbReference type="Gene3D" id="3.30.230.10">
    <property type="match status" value="1"/>
</dbReference>
<dbReference type="HAMAP" id="MF_01307_A">
    <property type="entry name" value="Ribosomal_uS5_A"/>
    <property type="match status" value="1"/>
</dbReference>
<dbReference type="InterPro" id="IPR020568">
    <property type="entry name" value="Ribosomal_Su5_D2-typ_SF"/>
</dbReference>
<dbReference type="InterPro" id="IPR000851">
    <property type="entry name" value="Ribosomal_uS5"/>
</dbReference>
<dbReference type="InterPro" id="IPR047866">
    <property type="entry name" value="Ribosomal_uS5_arc"/>
</dbReference>
<dbReference type="InterPro" id="IPR005324">
    <property type="entry name" value="Ribosomal_uS5_C"/>
</dbReference>
<dbReference type="InterPro" id="IPR005711">
    <property type="entry name" value="Ribosomal_uS5_euk/arc"/>
</dbReference>
<dbReference type="InterPro" id="IPR013810">
    <property type="entry name" value="Ribosomal_uS5_N"/>
</dbReference>
<dbReference type="InterPro" id="IPR018192">
    <property type="entry name" value="Ribosomal_uS5_N_CS"/>
</dbReference>
<dbReference type="InterPro" id="IPR014721">
    <property type="entry name" value="Ribsml_uS5_D2-typ_fold_subgr"/>
</dbReference>
<dbReference type="NCBIfam" id="NF003125">
    <property type="entry name" value="PRK04044.1"/>
    <property type="match status" value="1"/>
</dbReference>
<dbReference type="NCBIfam" id="TIGR01020">
    <property type="entry name" value="uS5_euk_arch"/>
    <property type="match status" value="1"/>
</dbReference>
<dbReference type="PANTHER" id="PTHR13718:SF4">
    <property type="entry name" value="40S RIBOSOMAL PROTEIN S2"/>
    <property type="match status" value="1"/>
</dbReference>
<dbReference type="PANTHER" id="PTHR13718">
    <property type="entry name" value="RIBOSOMAL S SUBUNIT"/>
    <property type="match status" value="1"/>
</dbReference>
<dbReference type="Pfam" id="PF00333">
    <property type="entry name" value="Ribosomal_S5"/>
    <property type="match status" value="1"/>
</dbReference>
<dbReference type="Pfam" id="PF03719">
    <property type="entry name" value="Ribosomal_S5_C"/>
    <property type="match status" value="1"/>
</dbReference>
<dbReference type="SUPFAM" id="SSF54768">
    <property type="entry name" value="dsRNA-binding domain-like"/>
    <property type="match status" value="1"/>
</dbReference>
<dbReference type="SUPFAM" id="SSF54211">
    <property type="entry name" value="Ribosomal protein S5 domain 2-like"/>
    <property type="match status" value="1"/>
</dbReference>
<dbReference type="PROSITE" id="PS00585">
    <property type="entry name" value="RIBOSOMAL_S5"/>
    <property type="match status" value="1"/>
</dbReference>
<dbReference type="PROSITE" id="PS50881">
    <property type="entry name" value="S5_DSRBD"/>
    <property type="match status" value="1"/>
</dbReference>
<feature type="chain" id="PRO_0000131647" description="Small ribosomal subunit protein uS5">
    <location>
        <begin position="1"/>
        <end position="209"/>
    </location>
</feature>
<feature type="domain" description="S5 DRBM" evidence="1">
    <location>
        <begin position="48"/>
        <end position="111"/>
    </location>
</feature>
<comment type="function">
    <text evidence="1">With S4 and S12 plays an important role in translational accuracy.</text>
</comment>
<comment type="subunit">
    <text evidence="1">Part of the 30S ribosomal subunit. Contacts protein S4.</text>
</comment>
<comment type="domain">
    <text>The N-terminal domain interacts with the head of the 30S subunit; the C-terminal domain interacts with the body and contacts protein S4. The interaction surface between S4 and S5 is involved in control of translational fidelity.</text>
</comment>
<comment type="similarity">
    <text evidence="1">Belongs to the universal ribosomal protein uS5 family.</text>
</comment>
<organism>
    <name type="scientific">Methanosarcina acetivorans (strain ATCC 35395 / DSM 2834 / JCM 12185 / C2A)</name>
    <dbReference type="NCBI Taxonomy" id="188937"/>
    <lineage>
        <taxon>Archaea</taxon>
        <taxon>Methanobacteriati</taxon>
        <taxon>Methanobacteriota</taxon>
        <taxon>Stenosarchaea group</taxon>
        <taxon>Methanomicrobia</taxon>
        <taxon>Methanosarcinales</taxon>
        <taxon>Methanosarcinaceae</taxon>
        <taxon>Methanosarcina</taxon>
    </lineage>
</organism>
<sequence>MAFDQDWVPKTRLGKLVVEGQVASMDEAIKSGLPIREPQIIDMLLPDLEDEVLDINMVQRMTDSGRRVKFRATVIVGNRNGYVGLGQAKDVQVGPAIRKAIDAAKLNITYIRRGCGSWECACGLPHTVPYEVTGKAGSVSVTLIPAPRGLGIAAGNTATKVLEKAGIKDVWTKTFGTTRSTLNFAKATYDALNQVNVVRLPVYYGKEEV</sequence>
<evidence type="ECO:0000255" key="1">
    <source>
        <dbReference type="HAMAP-Rule" id="MF_01307"/>
    </source>
</evidence>
<evidence type="ECO:0000305" key="2"/>
<reference key="1">
    <citation type="journal article" date="2002" name="Genome Res.">
        <title>The genome of Methanosarcina acetivorans reveals extensive metabolic and physiological diversity.</title>
        <authorList>
            <person name="Galagan J.E."/>
            <person name="Nusbaum C."/>
            <person name="Roy A."/>
            <person name="Endrizzi M.G."/>
            <person name="Macdonald P."/>
            <person name="FitzHugh W."/>
            <person name="Calvo S."/>
            <person name="Engels R."/>
            <person name="Smirnov S."/>
            <person name="Atnoor D."/>
            <person name="Brown A."/>
            <person name="Allen N."/>
            <person name="Naylor J."/>
            <person name="Stange-Thomann N."/>
            <person name="DeArellano K."/>
            <person name="Johnson R."/>
            <person name="Linton L."/>
            <person name="McEwan P."/>
            <person name="McKernan K."/>
            <person name="Talamas J."/>
            <person name="Tirrell A."/>
            <person name="Ye W."/>
            <person name="Zimmer A."/>
            <person name="Barber R.D."/>
            <person name="Cann I."/>
            <person name="Graham D.E."/>
            <person name="Grahame D.A."/>
            <person name="Guss A.M."/>
            <person name="Hedderich R."/>
            <person name="Ingram-Smith C."/>
            <person name="Kuettner H.C."/>
            <person name="Krzycki J.A."/>
            <person name="Leigh J.A."/>
            <person name="Li W."/>
            <person name="Liu J."/>
            <person name="Mukhopadhyay B."/>
            <person name="Reeve J.N."/>
            <person name="Smith K."/>
            <person name="Springer T.A."/>
            <person name="Umayam L.A."/>
            <person name="White O."/>
            <person name="White R.H."/>
            <person name="de Macario E.C."/>
            <person name="Ferry J.G."/>
            <person name="Jarrell K.F."/>
            <person name="Jing H."/>
            <person name="Macario A.J.L."/>
            <person name="Paulsen I.T."/>
            <person name="Pritchett M."/>
            <person name="Sowers K.R."/>
            <person name="Swanson R.V."/>
            <person name="Zinder S.H."/>
            <person name="Lander E."/>
            <person name="Metcalf W.W."/>
            <person name="Birren B."/>
        </authorList>
    </citation>
    <scope>NUCLEOTIDE SEQUENCE [LARGE SCALE GENOMIC DNA]</scope>
    <source>
        <strain>ATCC 35395 / DSM 2834 / JCM 12185 / C2A</strain>
    </source>
</reference>
<gene>
    <name evidence="1" type="primary">rps5</name>
    <name type="ordered locus">MA_1092</name>
</gene>